<feature type="peptide" id="PRO_0000414110" description="Pro-rich toxin 4">
    <location>
        <begin position="1"/>
        <end position="19"/>
    </location>
</feature>
<feature type="peptide" id="PRO_0000414111" description="Pro-rich toxin 2">
    <location>
        <begin position="1"/>
        <end position="18"/>
    </location>
</feature>
<feature type="peptide" id="PRO_0000414112" description="Pro-rich toxin 3">
    <location>
        <begin position="1"/>
        <end position="17"/>
    </location>
</feature>
<feature type="peptide" id="PRO_0000414113" description="Pro-rich toxin 1">
    <location>
        <begin position="8"/>
        <end position="18"/>
    </location>
</feature>
<feature type="glycosylation site" description="O-linked (HexNAc...) serine">
    <location>
        <position position="15"/>
    </location>
</feature>
<comment type="subcellular location">
    <subcellularLocation>
        <location>Secreted</location>
    </subcellularLocation>
</comment>
<comment type="tissue specificity">
    <text>Expressed by the venom duct.</text>
</comment>
<comment type="mass spectrometry" mass="2277.36" method="MALDI" evidence="1">
    <molecule>Pro-rich toxin 4</molecule>
</comment>
<comment type="mass spectrometry" mass="2164.13" method="MALDI" evidence="1">
    <molecule>Pro-rich toxin 2</molecule>
</comment>
<comment type="mass spectrometry" mass="2077.31" method="MALDI" evidence="1">
    <molecule>Pro-rich toxin 3</molecule>
</comment>
<comment type="mass spectrometry" mass="1442.7" method="MALDI" evidence="1">
    <molecule>Pro-rich toxin 1</molecule>
</comment>
<sequence length="19" mass="1913">KSPPQALNKPLPAPSAPSL</sequence>
<accession>P0DJ96</accession>
<protein>
    <recommendedName>
        <fullName>Pro-rich toxin 4</fullName>
    </recommendedName>
    <component>
        <recommendedName>
            <fullName>Pro-rich toxin 1</fullName>
        </recommendedName>
    </component>
    <component>
        <recommendedName>
            <fullName>Pro-rich toxin 2</fullName>
        </recommendedName>
    </component>
    <component>
        <recommendedName>
            <fullName>Pro-rich toxin 3</fullName>
        </recommendedName>
    </component>
</protein>
<organism>
    <name type="scientific">Dendroaspis angusticeps</name>
    <name type="common">Eastern green mamba</name>
    <name type="synonym">Naja angusticeps</name>
    <dbReference type="NCBI Taxonomy" id="8618"/>
    <lineage>
        <taxon>Eukaryota</taxon>
        <taxon>Metazoa</taxon>
        <taxon>Chordata</taxon>
        <taxon>Craniata</taxon>
        <taxon>Vertebrata</taxon>
        <taxon>Euteleostomi</taxon>
        <taxon>Lepidosauria</taxon>
        <taxon>Squamata</taxon>
        <taxon>Bifurcata</taxon>
        <taxon>Unidentata</taxon>
        <taxon>Episquamata</taxon>
        <taxon>Toxicofera</taxon>
        <taxon>Serpentes</taxon>
        <taxon>Colubroidea</taxon>
        <taxon>Elapidae</taxon>
        <taxon>Elapinae</taxon>
        <taxon>Dendroaspis</taxon>
    </lineage>
</organism>
<name>TX22_DENAN</name>
<evidence type="ECO:0000269" key="1">
    <source>
    </source>
</evidence>
<dbReference type="GO" id="GO:0005576">
    <property type="term" value="C:extracellular region"/>
    <property type="evidence" value="ECO:0007669"/>
    <property type="project" value="UniProtKB-SubCell"/>
</dbReference>
<dbReference type="GO" id="GO:0090729">
    <property type="term" value="F:toxin activity"/>
    <property type="evidence" value="ECO:0007669"/>
    <property type="project" value="UniProtKB-KW"/>
</dbReference>
<proteinExistence type="evidence at protein level"/>
<reference key="1">
    <citation type="journal article" date="2011" name="J. Am. Soc. Mass Spectrom.">
        <title>An unusual family of glycosylated peptides isolated from Dendroaspis angusticeps venom and characterized by combination of collision induced and electron transfer dissociation.</title>
        <authorList>
            <person name="Quinton L."/>
            <person name="Gilles N."/>
            <person name="Smargiasso N."/>
            <person name="Kiehne A."/>
            <person name="De Pauw E."/>
        </authorList>
    </citation>
    <scope>PROTEIN SEQUENCE</scope>
    <scope>MASS SPECTROMETRY</scope>
    <source>
        <tissue>Venom</tissue>
    </source>
</reference>
<keyword id="KW-0903">Direct protein sequencing</keyword>
<keyword id="KW-0325">Glycoprotein</keyword>
<keyword id="KW-0964">Secreted</keyword>
<keyword id="KW-0800">Toxin</keyword>